<dbReference type="EC" id="2.5.1.3" evidence="1"/>
<dbReference type="EMBL" id="AM167904">
    <property type="protein sequence ID" value="CAJ50625.1"/>
    <property type="molecule type" value="Genomic_DNA"/>
</dbReference>
<dbReference type="RefSeq" id="WP_012418653.1">
    <property type="nucleotide sequence ID" value="NC_010645.1"/>
</dbReference>
<dbReference type="SMR" id="Q2KUS6"/>
<dbReference type="STRING" id="360910.BAV3015"/>
<dbReference type="KEGG" id="bav:BAV3015"/>
<dbReference type="eggNOG" id="COG0352">
    <property type="taxonomic scope" value="Bacteria"/>
</dbReference>
<dbReference type="HOGENOM" id="CLU_018272_3_1_4"/>
<dbReference type="OrthoDB" id="9810880at2"/>
<dbReference type="UniPathway" id="UPA00060">
    <property type="reaction ID" value="UER00141"/>
</dbReference>
<dbReference type="Proteomes" id="UP000001977">
    <property type="component" value="Chromosome"/>
</dbReference>
<dbReference type="GO" id="GO:0005737">
    <property type="term" value="C:cytoplasm"/>
    <property type="evidence" value="ECO:0007669"/>
    <property type="project" value="TreeGrafter"/>
</dbReference>
<dbReference type="GO" id="GO:0000287">
    <property type="term" value="F:magnesium ion binding"/>
    <property type="evidence" value="ECO:0007669"/>
    <property type="project" value="UniProtKB-UniRule"/>
</dbReference>
<dbReference type="GO" id="GO:0004789">
    <property type="term" value="F:thiamine-phosphate diphosphorylase activity"/>
    <property type="evidence" value="ECO:0007669"/>
    <property type="project" value="UniProtKB-UniRule"/>
</dbReference>
<dbReference type="GO" id="GO:0009228">
    <property type="term" value="P:thiamine biosynthetic process"/>
    <property type="evidence" value="ECO:0007669"/>
    <property type="project" value="UniProtKB-KW"/>
</dbReference>
<dbReference type="GO" id="GO:0009229">
    <property type="term" value="P:thiamine diphosphate biosynthetic process"/>
    <property type="evidence" value="ECO:0007669"/>
    <property type="project" value="UniProtKB-UniRule"/>
</dbReference>
<dbReference type="CDD" id="cd00564">
    <property type="entry name" value="TMP_TenI"/>
    <property type="match status" value="1"/>
</dbReference>
<dbReference type="Gene3D" id="3.20.20.70">
    <property type="entry name" value="Aldolase class I"/>
    <property type="match status" value="1"/>
</dbReference>
<dbReference type="HAMAP" id="MF_00097">
    <property type="entry name" value="TMP_synthase"/>
    <property type="match status" value="1"/>
</dbReference>
<dbReference type="InterPro" id="IPR013785">
    <property type="entry name" value="Aldolase_TIM"/>
</dbReference>
<dbReference type="InterPro" id="IPR036206">
    <property type="entry name" value="ThiamineP_synth_sf"/>
</dbReference>
<dbReference type="InterPro" id="IPR022998">
    <property type="entry name" value="ThiamineP_synth_TenI"/>
</dbReference>
<dbReference type="InterPro" id="IPR034291">
    <property type="entry name" value="TMP_synthase"/>
</dbReference>
<dbReference type="NCBIfam" id="TIGR00693">
    <property type="entry name" value="thiE"/>
    <property type="match status" value="1"/>
</dbReference>
<dbReference type="PANTHER" id="PTHR20857">
    <property type="entry name" value="THIAMINE-PHOSPHATE PYROPHOSPHORYLASE"/>
    <property type="match status" value="1"/>
</dbReference>
<dbReference type="PANTHER" id="PTHR20857:SF15">
    <property type="entry name" value="THIAMINE-PHOSPHATE SYNTHASE"/>
    <property type="match status" value="1"/>
</dbReference>
<dbReference type="Pfam" id="PF02581">
    <property type="entry name" value="TMP-TENI"/>
    <property type="match status" value="1"/>
</dbReference>
<dbReference type="SUPFAM" id="SSF51391">
    <property type="entry name" value="Thiamin phosphate synthase"/>
    <property type="match status" value="1"/>
</dbReference>
<feature type="chain" id="PRO_1000008130" description="Thiamine-phosphate synthase">
    <location>
        <begin position="1"/>
        <end position="216"/>
    </location>
</feature>
<feature type="binding site" evidence="1">
    <location>
        <begin position="39"/>
        <end position="43"/>
    </location>
    <ligand>
        <name>4-amino-2-methyl-5-(diphosphooxymethyl)pyrimidine</name>
        <dbReference type="ChEBI" id="CHEBI:57841"/>
    </ligand>
</feature>
<feature type="binding site" evidence="1">
    <location>
        <position position="71"/>
    </location>
    <ligand>
        <name>4-amino-2-methyl-5-(diphosphooxymethyl)pyrimidine</name>
        <dbReference type="ChEBI" id="CHEBI:57841"/>
    </ligand>
</feature>
<feature type="binding site" evidence="1">
    <location>
        <position position="72"/>
    </location>
    <ligand>
        <name>Mg(2+)</name>
        <dbReference type="ChEBI" id="CHEBI:18420"/>
    </ligand>
</feature>
<feature type="binding site" evidence="1">
    <location>
        <position position="91"/>
    </location>
    <ligand>
        <name>Mg(2+)</name>
        <dbReference type="ChEBI" id="CHEBI:18420"/>
    </ligand>
</feature>
<feature type="binding site" evidence="1">
    <location>
        <position position="109"/>
    </location>
    <ligand>
        <name>4-amino-2-methyl-5-(diphosphooxymethyl)pyrimidine</name>
        <dbReference type="ChEBI" id="CHEBI:57841"/>
    </ligand>
</feature>
<feature type="binding site" evidence="1">
    <location>
        <begin position="136"/>
        <end position="138"/>
    </location>
    <ligand>
        <name>2-[(2R,5Z)-2-carboxy-4-methylthiazol-5(2H)-ylidene]ethyl phosphate</name>
        <dbReference type="ChEBI" id="CHEBI:62899"/>
    </ligand>
</feature>
<feature type="binding site" evidence="1">
    <location>
        <position position="139"/>
    </location>
    <ligand>
        <name>4-amino-2-methyl-5-(diphosphooxymethyl)pyrimidine</name>
        <dbReference type="ChEBI" id="CHEBI:57841"/>
    </ligand>
</feature>
<feature type="binding site" evidence="1">
    <location>
        <position position="172"/>
    </location>
    <ligand>
        <name>2-[(2R,5Z)-2-carboxy-4-methylthiazol-5(2H)-ylidene]ethyl phosphate</name>
        <dbReference type="ChEBI" id="CHEBI:62899"/>
    </ligand>
</feature>
<feature type="binding site" evidence="1">
    <location>
        <begin position="192"/>
        <end position="193"/>
    </location>
    <ligand>
        <name>2-[(2R,5Z)-2-carboxy-4-methylthiazol-5(2H)-ylidene]ethyl phosphate</name>
        <dbReference type="ChEBI" id="CHEBI:62899"/>
    </ligand>
</feature>
<comment type="function">
    <text evidence="1">Condenses 4-methyl-5-(beta-hydroxyethyl)thiazole monophosphate (THZ-P) and 2-methyl-4-amino-5-hydroxymethyl pyrimidine pyrophosphate (HMP-PP) to form thiamine monophosphate (TMP).</text>
</comment>
<comment type="catalytic activity">
    <reaction evidence="1">
        <text>2-[(2R,5Z)-2-carboxy-4-methylthiazol-5(2H)-ylidene]ethyl phosphate + 4-amino-2-methyl-5-(diphosphooxymethyl)pyrimidine + 2 H(+) = thiamine phosphate + CO2 + diphosphate</text>
        <dbReference type="Rhea" id="RHEA:47844"/>
        <dbReference type="ChEBI" id="CHEBI:15378"/>
        <dbReference type="ChEBI" id="CHEBI:16526"/>
        <dbReference type="ChEBI" id="CHEBI:33019"/>
        <dbReference type="ChEBI" id="CHEBI:37575"/>
        <dbReference type="ChEBI" id="CHEBI:57841"/>
        <dbReference type="ChEBI" id="CHEBI:62899"/>
        <dbReference type="EC" id="2.5.1.3"/>
    </reaction>
</comment>
<comment type="catalytic activity">
    <reaction evidence="1">
        <text>2-(2-carboxy-4-methylthiazol-5-yl)ethyl phosphate + 4-amino-2-methyl-5-(diphosphooxymethyl)pyrimidine + 2 H(+) = thiamine phosphate + CO2 + diphosphate</text>
        <dbReference type="Rhea" id="RHEA:47848"/>
        <dbReference type="ChEBI" id="CHEBI:15378"/>
        <dbReference type="ChEBI" id="CHEBI:16526"/>
        <dbReference type="ChEBI" id="CHEBI:33019"/>
        <dbReference type="ChEBI" id="CHEBI:37575"/>
        <dbReference type="ChEBI" id="CHEBI:57841"/>
        <dbReference type="ChEBI" id="CHEBI:62890"/>
        <dbReference type="EC" id="2.5.1.3"/>
    </reaction>
</comment>
<comment type="catalytic activity">
    <reaction evidence="1">
        <text>4-methyl-5-(2-phosphooxyethyl)-thiazole + 4-amino-2-methyl-5-(diphosphooxymethyl)pyrimidine + H(+) = thiamine phosphate + diphosphate</text>
        <dbReference type="Rhea" id="RHEA:22328"/>
        <dbReference type="ChEBI" id="CHEBI:15378"/>
        <dbReference type="ChEBI" id="CHEBI:33019"/>
        <dbReference type="ChEBI" id="CHEBI:37575"/>
        <dbReference type="ChEBI" id="CHEBI:57841"/>
        <dbReference type="ChEBI" id="CHEBI:58296"/>
        <dbReference type="EC" id="2.5.1.3"/>
    </reaction>
</comment>
<comment type="cofactor">
    <cofactor evidence="1">
        <name>Mg(2+)</name>
        <dbReference type="ChEBI" id="CHEBI:18420"/>
    </cofactor>
    <text evidence="1">Binds 1 Mg(2+) ion per subunit.</text>
</comment>
<comment type="pathway">
    <text evidence="1">Cofactor biosynthesis; thiamine diphosphate biosynthesis; thiamine phosphate from 4-amino-2-methyl-5-diphosphomethylpyrimidine and 4-methyl-5-(2-phosphoethyl)-thiazole: step 1/1.</text>
</comment>
<comment type="similarity">
    <text evidence="1">Belongs to the thiamine-phosphate synthase family.</text>
</comment>
<evidence type="ECO:0000255" key="1">
    <source>
        <dbReference type="HAMAP-Rule" id="MF_00097"/>
    </source>
</evidence>
<sequence>MNTLRFPAGLYGVTPEWDDTSRLLAAVRDAAAGGMRALQLRRKHLSREQRLLQARALAPLCRELGVTFIVNDDWRTALEAGADGAHIGRDDATLAEVRAAAPGLLLGVSCYADLNRARELLAQGADYIAFGAVFPSPTKPQAAHAPLALLGEAAAQVRACGEPRPAVVAIGGITPANAGLVAAAGADSIAVITGLFEAPDIRAAAQACAAPFPLTD</sequence>
<name>THIE_BORA1</name>
<reference key="1">
    <citation type="journal article" date="2006" name="J. Bacteriol.">
        <title>Comparison of the genome sequence of the poultry pathogen Bordetella avium with those of B. bronchiseptica, B. pertussis, and B. parapertussis reveals extensive diversity in surface structures associated with host interaction.</title>
        <authorList>
            <person name="Sebaihia M."/>
            <person name="Preston A."/>
            <person name="Maskell D.J."/>
            <person name="Kuzmiak H."/>
            <person name="Connell T.D."/>
            <person name="King N.D."/>
            <person name="Orndorff P.E."/>
            <person name="Miyamoto D.M."/>
            <person name="Thomson N.R."/>
            <person name="Harris D."/>
            <person name="Goble A."/>
            <person name="Lord A."/>
            <person name="Murphy L."/>
            <person name="Quail M.A."/>
            <person name="Rutter S."/>
            <person name="Squares R."/>
            <person name="Squares S."/>
            <person name="Woodward J."/>
            <person name="Parkhill J."/>
            <person name="Temple L.M."/>
        </authorList>
    </citation>
    <scope>NUCLEOTIDE SEQUENCE [LARGE SCALE GENOMIC DNA]</scope>
    <source>
        <strain>197N</strain>
    </source>
</reference>
<accession>Q2KUS6</accession>
<keyword id="KW-0460">Magnesium</keyword>
<keyword id="KW-0479">Metal-binding</keyword>
<keyword id="KW-1185">Reference proteome</keyword>
<keyword id="KW-0784">Thiamine biosynthesis</keyword>
<keyword id="KW-0808">Transferase</keyword>
<organism>
    <name type="scientific">Bordetella avium (strain 197N)</name>
    <dbReference type="NCBI Taxonomy" id="360910"/>
    <lineage>
        <taxon>Bacteria</taxon>
        <taxon>Pseudomonadati</taxon>
        <taxon>Pseudomonadota</taxon>
        <taxon>Betaproteobacteria</taxon>
        <taxon>Burkholderiales</taxon>
        <taxon>Alcaligenaceae</taxon>
        <taxon>Bordetella</taxon>
    </lineage>
</organism>
<gene>
    <name evidence="1" type="primary">thiE</name>
    <name type="ordered locus">BAV3015</name>
</gene>
<proteinExistence type="inferred from homology"/>
<protein>
    <recommendedName>
        <fullName evidence="1">Thiamine-phosphate synthase</fullName>
        <shortName evidence="1">TP synthase</shortName>
        <shortName evidence="1">TPS</shortName>
        <ecNumber evidence="1">2.5.1.3</ecNumber>
    </recommendedName>
    <alternativeName>
        <fullName evidence="1">Thiamine-phosphate pyrophosphorylase</fullName>
        <shortName evidence="1">TMP pyrophosphorylase</shortName>
        <shortName evidence="1">TMP-PPase</shortName>
    </alternativeName>
</protein>